<organism>
    <name type="scientific">Homo sapiens</name>
    <name type="common">Human</name>
    <dbReference type="NCBI Taxonomy" id="9606"/>
    <lineage>
        <taxon>Eukaryota</taxon>
        <taxon>Metazoa</taxon>
        <taxon>Chordata</taxon>
        <taxon>Craniata</taxon>
        <taxon>Vertebrata</taxon>
        <taxon>Euteleostomi</taxon>
        <taxon>Mammalia</taxon>
        <taxon>Eutheria</taxon>
        <taxon>Euarchontoglires</taxon>
        <taxon>Primates</taxon>
        <taxon>Haplorrhini</taxon>
        <taxon>Catarrhini</taxon>
        <taxon>Hominidae</taxon>
        <taxon>Homo</taxon>
    </lineage>
</organism>
<evidence type="ECO:0000250" key="1">
    <source>
        <dbReference type="UniProtKB" id="Q8BG26"/>
    </source>
</evidence>
<evidence type="ECO:0000255" key="2">
    <source>
        <dbReference type="PROSITE-ProRule" id="PRU00178"/>
    </source>
</evidence>
<evidence type="ECO:0000255" key="3">
    <source>
        <dbReference type="PROSITE-ProRule" id="PRU00192"/>
    </source>
</evidence>
<evidence type="ECO:0000256" key="4">
    <source>
        <dbReference type="SAM" id="MobiDB-lite"/>
    </source>
</evidence>
<evidence type="ECO:0000269" key="5">
    <source>
    </source>
</evidence>
<evidence type="ECO:0000269" key="6">
    <source>
    </source>
</evidence>
<evidence type="ECO:0000269" key="7">
    <source>
    </source>
</evidence>
<evidence type="ECO:0000303" key="8">
    <source>
    </source>
</evidence>
<evidence type="ECO:0000303" key="9">
    <source>
    </source>
</evidence>
<evidence type="ECO:0000303" key="10">
    <source>
    </source>
</evidence>
<evidence type="ECO:0000303" key="11">
    <source>
    </source>
</evidence>
<evidence type="ECO:0000303" key="12">
    <source>
    </source>
</evidence>
<evidence type="ECO:0000303" key="13">
    <source>
    </source>
</evidence>
<evidence type="ECO:0000303" key="14">
    <source>
    </source>
</evidence>
<evidence type="ECO:0000305" key="15"/>
<evidence type="ECO:0000312" key="16">
    <source>
        <dbReference type="HGNC" id="HGNC:17153"/>
    </source>
</evidence>
<evidence type="ECO:0007829" key="17">
    <source>
        <dbReference type="PDB" id="4GIW"/>
    </source>
</evidence>
<protein>
    <recommendedName>
        <fullName evidence="15">AP-4 complex accessory subunit RUSC1</fullName>
    </recommendedName>
    <alternativeName>
        <fullName evidence="13">New molecule containing SH3 at the carboxy-terminus</fullName>
        <shortName evidence="13">Nesca</shortName>
    </alternativeName>
    <alternativeName>
        <fullName>RUN and SH3 domain-containing protein 1</fullName>
    </alternativeName>
</protein>
<sequence>MLSPQRALLCNLNHIHLQHVSLGLHLSRRPELQEGPLSTPPPPGDTGGKESRGPCSGTLVDANSNSPAVPCRCCQEHGPGLENRQDPSQEEEGAASPSDPGCSSSLSSCSDLSPDESPVSVYLRDLPGDEDAHPQPSIIPLEQGSPLASAGPGTCSPDSFCCSPDSCSGASSSPDPGLDSNCNALTTCQDVPSPGLEEEDERAEQDLPTSELLEADDGKIDAGKTEPSWKINPIWKIDTEKTKAEWKTTENNNTGWKNNGNVNSSWKSEPEKFDSGWKTNTRITDSGSKTDAGKIDGGWRSDVSEEPVPHRTITSFHELAQKRKRGPGLPLVPQAKKDRSDWLIVFSPDTELPPSGSPGGSSAPPREVTTFKELRSRSRAPAPPVPPRDPPVGWALVPPRPPPPPVPPRRKKNRPGLQPIAEGQSEEGRAVSPAAGEEAPAAKEPGAQAGLEVRSSWSFAGVPGAQRLWMAEAQSGTGQLQEQKKGLLIAVSVSVDKIISHFGAARNLVQKAQLGDSRLSPDVGHLVLTTLCPALHALVADGLKPFRKDLITGQRRSSPWSVVEASVKPGSSTRSLGTLYSQVSRLAPLSSSRSRFHAFILGLLNTKQLELWFSSLQEDAGLLSLLYLPTGFFSLARGGCPSLSTELLLLLQPLSVLTFHLDLLFEHHHHLPLGPPQAPAPPGPPPALQQTMQAMLHFGGRLAQSLRGTSKEAASDPSDSPNLPTPGSWWEQLTQASRVYASGGTEGFPLSRWAPGRHGTAAEEGAQERPLPTDEMAPGRGLWLGRLFGVPGGPAENENGALKSRRPSSWLPPTVSVLALVKRGAPPEMPSPQELEASAPRMVQTHRAVRALCDHTAARPDQLSFRRGEVLRVITTVDEDWLRCGRDGMEGLVPVGYTSLVL</sequence>
<comment type="function">
    <text evidence="1 5 6 7">Associates with the adapter-like complex 4 (AP-4) and may therefore play a role in vesicular trafficking of proteins at the trans-Golgi network (PubMed:30262884). Signaling adapter which plays a role in neuronal differentiation (PubMed:15024033). Involved in regulation of NGF-dependent neurite outgrowth (PubMed:15024033). May play a role in neuronal vesicular trafficking, specifically involving pre-synaptic membrane proteins (By similarity). Seems to be involved in signaling pathways that are regulated by the prolonged activation of MAPK (PubMed:15024033). Can regulate the polyubiquitination of IKBKG and thus may be involved in regulation of the NF-kappa-B pathway (PubMed:19365808).</text>
</comment>
<comment type="subunit">
    <text evidence="1 6 7">Associated component of the adapter-like complex 4 (AP-4) (PubMed:30262884). Interacts with IKBKG and TRAF6 (PubMed:19365808). Interacts with F-actin, acetylated actin, TUBB3, STX1A, KIF5B and KLC1 (By similarity).</text>
</comment>
<comment type="interaction">
    <interactant intactId="EBI-6257312">
        <id>Q9BVN2</id>
    </interactant>
    <interactant intactId="EBI-12318443">
        <id>Q8NFV4-4</id>
        <label>ABHD11</label>
    </interactant>
    <organismsDiffer>false</organismsDiffer>
    <experiments>3</experiments>
</comment>
<comment type="interaction">
    <interactant intactId="EBI-6257312">
        <id>Q9BVN2</id>
    </interactant>
    <interactant intactId="EBI-2813554">
        <id>Q8WTS1</id>
        <label>ABHD5</label>
    </interactant>
    <organismsDiffer>false</organismsDiffer>
    <experiments>3</experiments>
</comment>
<comment type="interaction">
    <interactant intactId="EBI-6257312">
        <id>Q9BVN2</id>
    </interactant>
    <interactant intactId="EBI-11096309">
        <id>Q9NYB9-2</id>
        <label>ABI2</label>
    </interactant>
    <organismsDiffer>false</organismsDiffer>
    <experiments>3</experiments>
</comment>
<comment type="interaction">
    <interactant intactId="EBI-6257312">
        <id>Q9BVN2</id>
    </interactant>
    <interactant intactId="EBI-8643161">
        <id>Q9NX04</id>
        <label>AIRIM</label>
    </interactant>
    <organismsDiffer>false</organismsDiffer>
    <experiments>5</experiments>
</comment>
<comment type="interaction">
    <interactant intactId="EBI-6257312">
        <id>Q9BVN2</id>
    </interactant>
    <interactant intactId="EBI-357530">
        <id>Q9ULX6</id>
        <label>AKAP8L</label>
    </interactant>
    <organismsDiffer>false</organismsDiffer>
    <experiments>3</experiments>
</comment>
<comment type="interaction">
    <interactant intactId="EBI-6257312">
        <id>Q9BVN2</id>
    </interactant>
    <interactant intactId="EBI-11954519">
        <id>Q49AR9</id>
        <label>ANKS1A</label>
    </interactant>
    <organismsDiffer>false</organismsDiffer>
    <experiments>3</experiments>
</comment>
<comment type="interaction">
    <interactant intactId="EBI-6257312">
        <id>Q9BVN2</id>
    </interactant>
    <interactant intactId="EBI-3923949">
        <id>Q8N8Y2</id>
        <label>ATP6V0D2</label>
    </interactant>
    <organismsDiffer>false</organismsDiffer>
    <experiments>3</experiments>
</comment>
<comment type="interaction">
    <interactant intactId="EBI-6257312">
        <id>Q9BVN2</id>
    </interactant>
    <interactant intactId="EBI-953896">
        <id>Q9NP55</id>
        <label>BPIFA1</label>
    </interactant>
    <organismsDiffer>false</organismsDiffer>
    <experiments>3</experiments>
</comment>
<comment type="interaction">
    <interactant intactId="EBI-6257312">
        <id>Q9BVN2</id>
    </interactant>
    <interactant intactId="EBI-744556">
        <id>Q96HB5</id>
        <label>CCDC120</label>
    </interactant>
    <organismsDiffer>false</organismsDiffer>
    <experiments>3</experiments>
</comment>
<comment type="interaction">
    <interactant intactId="EBI-6257312">
        <id>Q9BVN2</id>
    </interactant>
    <interactant intactId="EBI-10961624">
        <id>Q2TAC2-2</id>
        <label>CCDC57</label>
    </interactant>
    <organismsDiffer>false</organismsDiffer>
    <experiments>3</experiments>
</comment>
<comment type="interaction">
    <interactant intactId="EBI-6257312">
        <id>Q9BVN2</id>
    </interactant>
    <interactant intactId="EBI-10175300">
        <id>Q8TD31-3</id>
        <label>CCHCR1</label>
    </interactant>
    <organismsDiffer>false</organismsDiffer>
    <experiments>3</experiments>
</comment>
<comment type="interaction">
    <interactant intactId="EBI-6257312">
        <id>Q9BVN2</id>
    </interactant>
    <interactant intactId="EBI-395261">
        <id>P24863</id>
        <label>CCNC</label>
    </interactant>
    <organismsDiffer>false</organismsDiffer>
    <experiments>3</experiments>
</comment>
<comment type="interaction">
    <interactant intactId="EBI-6257312">
        <id>Q9BVN2</id>
    </interactant>
    <interactant intactId="EBI-711280">
        <id>P42772</id>
        <label>CDKN2B</label>
    </interactant>
    <organismsDiffer>false</organismsDiffer>
    <experiments>3</experiments>
</comment>
<comment type="interaction">
    <interactant intactId="EBI-6257312">
        <id>Q9BVN2</id>
    </interactant>
    <interactant intactId="EBI-1054315">
        <id>Q9NX76</id>
        <label>CMTM6</label>
    </interactant>
    <organismsDiffer>false</organismsDiffer>
    <experiments>3</experiments>
</comment>
<comment type="interaction">
    <interactant intactId="EBI-6257312">
        <id>Q9BVN2</id>
    </interactant>
    <interactant intactId="EBI-12884642">
        <id>Q03060-25</id>
        <label>CREM</label>
    </interactant>
    <organismsDiffer>false</organismsDiffer>
    <experiments>3</experiments>
</comment>
<comment type="interaction">
    <interactant intactId="EBI-6257312">
        <id>Q9BVN2</id>
    </interactant>
    <interactant intactId="EBI-750444">
        <id>P53672</id>
        <label>CRYBA2</label>
    </interactant>
    <organismsDiffer>false</organismsDiffer>
    <experiments>3</experiments>
</comment>
<comment type="interaction">
    <interactant intactId="EBI-6257312">
        <id>Q9BVN2</id>
    </interactant>
    <interactant intactId="EBI-1188472">
        <id>P78358</id>
        <label>CTAG1B</label>
    </interactant>
    <organismsDiffer>false</organismsDiffer>
    <experiments>3</experiments>
</comment>
<comment type="interaction">
    <interactant intactId="EBI-6257312">
        <id>Q9BVN2</id>
    </interactant>
    <interactant intactId="EBI-9679045">
        <id>Q9NQL9</id>
        <label>DMRT3</label>
    </interactant>
    <organismsDiffer>false</organismsDiffer>
    <experiments>3</experiments>
</comment>
<comment type="interaction">
    <interactant intactId="EBI-6257312">
        <id>Q9BVN2</id>
    </interactant>
    <interactant intactId="EBI-2880244">
        <id>Q6PKX4</id>
        <label>DOK6</label>
    </interactant>
    <organismsDiffer>false</organismsDiffer>
    <experiments>3</experiments>
</comment>
<comment type="interaction">
    <interactant intactId="EBI-6257312">
        <id>Q9BVN2</id>
    </interactant>
    <interactant intactId="EBI-750300">
        <id>Q01658</id>
        <label>DR1</label>
    </interactant>
    <organismsDiffer>false</organismsDiffer>
    <experiments>3</experiments>
</comment>
<comment type="interaction">
    <interactant intactId="EBI-6257312">
        <id>Q9BVN2</id>
    </interactant>
    <interactant intactId="EBI-740376">
        <id>Q86UW9</id>
        <label>DTX2</label>
    </interactant>
    <organismsDiffer>false</organismsDiffer>
    <experiments>3</experiments>
</comment>
<comment type="interaction">
    <interactant intactId="EBI-6257312">
        <id>Q9BVN2</id>
    </interactant>
    <interactant intactId="EBI-742102">
        <id>Q8IYI6</id>
        <label>EXOC8</label>
    </interactant>
    <organismsDiffer>false</organismsDiffer>
    <experiments>3</experiments>
</comment>
<comment type="interaction">
    <interactant intactId="EBI-6257312">
        <id>Q9BVN2</id>
    </interactant>
    <interactant intactId="EBI-371922">
        <id>Q96B26</id>
        <label>EXOSC8</label>
    </interactant>
    <organismsDiffer>false</organismsDiffer>
    <experiments>6</experiments>
</comment>
<comment type="interaction">
    <interactant intactId="EBI-6257312">
        <id>Q9BVN2</id>
    </interactant>
    <interactant intactId="EBI-10175124">
        <id>Q8IZU0</id>
        <label>FAM9B</label>
    </interactant>
    <organismsDiffer>false</organismsDiffer>
    <experiments>5</experiments>
</comment>
<comment type="interaction">
    <interactant intactId="EBI-6257312">
        <id>Q9BVN2</id>
    </interactant>
    <interactant intactId="EBI-10242151">
        <id>Q53EP0-3</id>
        <label>FNDC3B</label>
    </interactant>
    <organismsDiffer>false</organismsDiffer>
    <experiments>3</experiments>
</comment>
<comment type="interaction">
    <interactant intactId="EBI-6257312">
        <id>Q9BVN2</id>
    </interactant>
    <interactant intactId="EBI-10188645">
        <id>O75603</id>
        <label>GCM2</label>
    </interactant>
    <organismsDiffer>false</organismsDiffer>
    <experiments>3</experiments>
</comment>
<comment type="interaction">
    <interactant intactId="EBI-6257312">
        <id>Q9BVN2</id>
    </interactant>
    <interactant intactId="EBI-389564">
        <id>Q00403</id>
        <label>GTF2B</label>
    </interactant>
    <organismsDiffer>false</organismsDiffer>
    <experiments>3</experiments>
</comment>
<comment type="interaction">
    <interactant intactId="EBI-6257312">
        <id>Q9BVN2</id>
    </interactant>
    <interactant intactId="EBI-1054873">
        <id>Q9Y5Q9</id>
        <label>GTF3C3</label>
    </interactant>
    <organismsDiffer>false</organismsDiffer>
    <experiments>3</experiments>
</comment>
<comment type="interaction">
    <interactant intactId="EBI-6257312">
        <id>Q9BVN2</id>
    </interactant>
    <interactant intactId="EBI-740641">
        <id>Q9NP66</id>
        <label>HMG20A</label>
    </interactant>
    <organismsDiffer>false</organismsDiffer>
    <experiments>3</experiments>
</comment>
<comment type="interaction">
    <interactant intactId="EBI-6257312">
        <id>Q9BVN2</id>
    </interactant>
    <interactant intactId="EBI-352986">
        <id>P52597</id>
        <label>HNRNPF</label>
    </interactant>
    <organismsDiffer>false</organismsDiffer>
    <experiments>3</experiments>
</comment>
<comment type="interaction">
    <interactant intactId="EBI-6257312">
        <id>Q9BVN2</id>
    </interactant>
    <interactant intactId="EBI-12081118">
        <id>Q1MX18</id>
        <label>INSC</label>
    </interactant>
    <organismsDiffer>false</organismsDiffer>
    <experiments>3</experiments>
</comment>
<comment type="interaction">
    <interactant intactId="EBI-6257312">
        <id>Q9BVN2</id>
    </interactant>
    <interactant intactId="EBI-4397613">
        <id>Q7L273</id>
        <label>KCTD9</label>
    </interactant>
    <organismsDiffer>false</organismsDiffer>
    <experiments>3</experiments>
</comment>
<comment type="interaction">
    <interactant intactId="EBI-6257312">
        <id>Q9BVN2</id>
    </interactant>
    <interactant intactId="EBI-12811111">
        <id>Q8IUB9</id>
        <label>KRTAP19-1</label>
    </interactant>
    <organismsDiffer>false</organismsDiffer>
    <experiments>3</experiments>
</comment>
<comment type="interaction">
    <interactant intactId="EBI-6257312">
        <id>Q9BVN2</id>
    </interactant>
    <interactant intactId="EBI-1048945">
        <id>Q3LI72</id>
        <label>KRTAP19-5</label>
    </interactant>
    <organismsDiffer>false</organismsDiffer>
    <experiments>3</experiments>
</comment>
<comment type="interaction">
    <interactant intactId="EBI-6257312">
        <id>Q9BVN2</id>
    </interactant>
    <interactant intactId="EBI-11962084">
        <id>Q3LI66</id>
        <label>KRTAP6-2</label>
    </interactant>
    <organismsDiffer>false</organismsDiffer>
    <experiments>5</experiments>
</comment>
<comment type="interaction">
    <interactant intactId="EBI-6257312">
        <id>Q9BVN2</id>
    </interactant>
    <interactant intactId="EBI-10261141">
        <id>Q8IUC2</id>
        <label>KRTAP8-1</label>
    </interactant>
    <organismsDiffer>false</organismsDiffer>
    <experiments>3</experiments>
</comment>
<comment type="interaction">
    <interactant intactId="EBI-6257312">
        <id>Q9BVN2</id>
    </interactant>
    <interactant intactId="EBI-10196832">
        <id>P0CW20</id>
        <label>LIMS4</label>
    </interactant>
    <organismsDiffer>false</organismsDiffer>
    <experiments>3</experiments>
</comment>
<comment type="interaction">
    <interactant intactId="EBI-6257312">
        <id>Q9BVN2</id>
    </interactant>
    <interactant intactId="EBI-11959475">
        <id>P25791-3</id>
        <label>LMO2</label>
    </interactant>
    <organismsDiffer>false</organismsDiffer>
    <experiments>3</experiments>
</comment>
<comment type="interaction">
    <interactant intactId="EBI-6257312">
        <id>Q9BVN2</id>
    </interactant>
    <interactant intactId="EBI-5651459">
        <id>P43357</id>
        <label>MAGEA3</label>
    </interactant>
    <organismsDiffer>false</organismsDiffer>
    <experiments>3</experiments>
</comment>
<comment type="interaction">
    <interactant intactId="EBI-6257312">
        <id>Q9BVN2</id>
    </interactant>
    <interactant intactId="EBI-1045155">
        <id>P43360</id>
        <label>MAGEA6</label>
    </interactant>
    <organismsDiffer>false</organismsDiffer>
    <experiments>3</experiments>
</comment>
<comment type="interaction">
    <interactant intactId="EBI-6257312">
        <id>Q9BVN2</id>
    </interactant>
    <interactant intactId="EBI-716006">
        <id>Q9Y5V3</id>
        <label>MAGED1</label>
    </interactant>
    <organismsDiffer>false</organismsDiffer>
    <experiments>3</experiments>
</comment>
<comment type="interaction">
    <interactant intactId="EBI-6257312">
        <id>Q9BVN2</id>
    </interactant>
    <interactant intactId="EBI-394558">
        <id>Q71SY5</id>
        <label>MED25</label>
    </interactant>
    <organismsDiffer>false</organismsDiffer>
    <experiments>3</experiments>
</comment>
<comment type="interaction">
    <interactant intactId="EBI-6257312">
        <id>Q9BVN2</id>
    </interactant>
    <interactant intactId="EBI-8025850">
        <id>O14770-4</id>
        <label>MEIS2</label>
    </interactant>
    <organismsDiffer>false</organismsDiffer>
    <experiments>3</experiments>
</comment>
<comment type="interaction">
    <interactant intactId="EBI-6257312">
        <id>Q9BVN2</id>
    </interactant>
    <interactant intactId="EBI-2555085">
        <id>Q8IVT2</id>
        <label>MISP</label>
    </interactant>
    <organismsDiffer>false</organismsDiffer>
    <experiments>3</experiments>
</comment>
<comment type="interaction">
    <interactant intactId="EBI-6257312">
        <id>Q9BVN2</id>
    </interactant>
    <interactant intactId="EBI-739825">
        <id>Q96BY2</id>
        <label>MOAP1</label>
    </interactant>
    <organismsDiffer>false</organismsDiffer>
    <experiments>3</experiments>
</comment>
<comment type="interaction">
    <interactant intactId="EBI-6257312">
        <id>Q9BVN2</id>
    </interactant>
    <interactant intactId="EBI-9675802">
        <id>Q6PF18</id>
        <label>MORN3</label>
    </interactant>
    <organismsDiffer>false</organismsDiffer>
    <experiments>3</experiments>
</comment>
<comment type="interaction">
    <interactant intactId="EBI-6257312">
        <id>Q9BVN2</id>
    </interactant>
    <interactant intactId="EBI-5662487">
        <id>Q8TDC0</id>
        <label>MYOZ3</label>
    </interactant>
    <organismsDiffer>false</organismsDiffer>
    <experiments>3</experiments>
</comment>
<comment type="interaction">
    <interactant intactId="EBI-6257312">
        <id>Q9BVN2</id>
    </interactant>
    <interactant intactId="EBI-2512055">
        <id>O15049</id>
        <label>N4BP3</label>
    </interactant>
    <organismsDiffer>false</organismsDiffer>
    <experiments>3</experiments>
</comment>
<comment type="interaction">
    <interactant intactId="EBI-6257312">
        <id>Q9BVN2</id>
    </interactant>
    <interactant intactId="EBI-13324229">
        <id>Q9BSH3</id>
        <label>NICN1</label>
    </interactant>
    <organismsDiffer>false</organismsDiffer>
    <experiments>3</experiments>
</comment>
<comment type="interaction">
    <interactant intactId="EBI-6257312">
        <id>Q9BVN2</id>
    </interactant>
    <interactant intactId="EBI-741158">
        <id>Q96HA8</id>
        <label>NTAQ1</label>
    </interactant>
    <organismsDiffer>false</organismsDiffer>
    <experiments>3</experiments>
</comment>
<comment type="interaction">
    <interactant intactId="EBI-6257312">
        <id>Q9BVN2</id>
    </interactant>
    <interactant intactId="EBI-10297093">
        <id>Q9BRQ3</id>
        <label>NUDT22</label>
    </interactant>
    <organismsDiffer>false</organismsDiffer>
    <experiments>4</experiments>
</comment>
<comment type="interaction">
    <interactant intactId="EBI-6257312">
        <id>Q9BVN2</id>
    </interactant>
    <interactant intactId="EBI-536879">
        <id>O43482</id>
        <label>OIP5</label>
    </interactant>
    <organismsDiffer>false</organismsDiffer>
    <experiments>3</experiments>
</comment>
<comment type="interaction">
    <interactant intactId="EBI-6257312">
        <id>Q9BVN2</id>
    </interactant>
    <interactant intactId="EBI-10181968">
        <id>Q7Z4N8</id>
        <label>P4HA3</label>
    </interactant>
    <organismsDiffer>false</organismsDiffer>
    <experiments>3</experiments>
</comment>
<comment type="interaction">
    <interactant intactId="EBI-6257312">
        <id>Q9BVN2</id>
    </interactant>
    <interactant intactId="EBI-357275">
        <id>Q99471</id>
        <label>PFDN5</label>
    </interactant>
    <organismsDiffer>false</organismsDiffer>
    <experiments>3</experiments>
</comment>
<comment type="interaction">
    <interactant intactId="EBI-6257312">
        <id>Q9BVN2</id>
    </interactant>
    <interactant intactId="EBI-79893">
        <id>Q92569</id>
        <label>PIK3R3</label>
    </interactant>
    <organismsDiffer>false</organismsDiffer>
    <experiments>3</experiments>
</comment>
<comment type="interaction">
    <interactant intactId="EBI-6257312">
        <id>Q9BVN2</id>
    </interactant>
    <interactant intactId="EBI-12089905">
        <id>O60733</id>
        <label>PLA2G6</label>
    </interactant>
    <organismsDiffer>false</organismsDiffer>
    <experiments>3</experiments>
</comment>
<comment type="interaction">
    <interactant intactId="EBI-6257312">
        <id>Q9BVN2</id>
    </interactant>
    <interactant intactId="EBI-11339910">
        <id>Q8IYS1</id>
        <label>PM20D2</label>
    </interactant>
    <organismsDiffer>false</organismsDiffer>
    <experiments>3</experiments>
</comment>
<comment type="interaction">
    <interactant intactId="EBI-6257312">
        <id>Q9BVN2</id>
    </interactant>
    <interactant intactId="EBI-302345">
        <id>Q8ND90</id>
        <label>PNMA1</label>
    </interactant>
    <organismsDiffer>false</organismsDiffer>
    <experiments>8</experiments>
</comment>
<comment type="interaction">
    <interactant intactId="EBI-6257312">
        <id>Q9BVN2</id>
    </interactant>
    <interactant intactId="EBI-1055079">
        <id>O15160</id>
        <label>POLR1C</label>
    </interactant>
    <organismsDiffer>false</organismsDiffer>
    <experiments>3</experiments>
</comment>
<comment type="interaction">
    <interactant intactId="EBI-6257312">
        <id>Q9BVN2</id>
    </interactant>
    <interactant intactId="EBI-3957793">
        <id>Q9GZV8</id>
        <label>PRDM14</label>
    </interactant>
    <organismsDiffer>false</organismsDiffer>
    <experiments>3</experiments>
</comment>
<comment type="interaction">
    <interactant intactId="EBI-6257312">
        <id>Q9BVN2</id>
    </interactant>
    <interactant intactId="EBI-11986293">
        <id>P0CG20</id>
        <label>PRR35</label>
    </interactant>
    <organismsDiffer>false</organismsDiffer>
    <experiments>3</experiments>
</comment>
<comment type="interaction">
    <interactant intactId="EBI-6257312">
        <id>Q9BVN2</id>
    </interactant>
    <interactant intactId="EBI-740322">
        <id>Q93062</id>
        <label>RBPMS</label>
    </interactant>
    <organismsDiffer>false</organismsDiffer>
    <experiments>4</experiments>
</comment>
<comment type="interaction">
    <interactant intactId="EBI-6257312">
        <id>Q9BVN2</id>
    </interactant>
    <interactant intactId="EBI-740343">
        <id>Q93062-3</id>
        <label>RBPMS</label>
    </interactant>
    <organismsDiffer>false</organismsDiffer>
    <experiments>3</experiments>
</comment>
<comment type="interaction">
    <interactant intactId="EBI-6257312">
        <id>Q9BVN2</id>
    </interactant>
    <interactant intactId="EBI-358436">
        <id>Q12824-2</id>
        <label>SMARCB1</label>
    </interactant>
    <organismsDiffer>false</organismsDiffer>
    <experiments>3</experiments>
</comment>
<comment type="interaction">
    <interactant intactId="EBI-6257312">
        <id>Q9BVN2</id>
    </interactant>
    <interactant intactId="EBI-8463848">
        <id>Q8NB12</id>
        <label>SMYD1</label>
    </interactant>
    <organismsDiffer>false</organismsDiffer>
    <experiments>3</experiments>
</comment>
<comment type="interaction">
    <interactant intactId="EBI-6257312">
        <id>Q9BVN2</id>
    </interactant>
    <interactant intactId="EBI-12288855">
        <id>Q5JUK2</id>
        <label>SOHLH1</label>
    </interactant>
    <organismsDiffer>false</organismsDiffer>
    <experiments>3</experiments>
</comment>
<comment type="interaction">
    <interactant intactId="EBI-6257312">
        <id>Q9BVN2</id>
    </interactant>
    <interactant intactId="EBI-11959123">
        <id>Q99932-2</id>
        <label>SPAG8</label>
    </interactant>
    <organismsDiffer>false</organismsDiffer>
    <experiments>3</experiments>
</comment>
<comment type="interaction">
    <interactant intactId="EBI-6257312">
        <id>Q9BVN2</id>
    </interactant>
    <interactant intactId="EBI-357085">
        <id>Q9UNE7</id>
        <label>STUB1</label>
    </interactant>
    <organismsDiffer>false</organismsDiffer>
    <experiments>3</experiments>
</comment>
<comment type="interaction">
    <interactant intactId="EBI-6257312">
        <id>Q9BVN2</id>
    </interactant>
    <interactant intactId="EBI-3921347">
        <id>P51687</id>
        <label>SUOX</label>
    </interactant>
    <organismsDiffer>false</organismsDiffer>
    <experiments>3</experiments>
</comment>
<comment type="interaction">
    <interactant intactId="EBI-6257312">
        <id>Q9BVN2</id>
    </interactant>
    <interactant intactId="EBI-11899977">
        <id>Q3MII6</id>
        <label>TBC1D25</label>
    </interactant>
    <organismsDiffer>false</organismsDiffer>
    <experiments>3</experiments>
</comment>
<comment type="interaction">
    <interactant intactId="EBI-6257312">
        <id>Q9BVN2</id>
    </interactant>
    <interactant intactId="EBI-740781">
        <id>Q9BT92</id>
        <label>TCHP</label>
    </interactant>
    <organismsDiffer>false</organismsDiffer>
    <experiments>3</experiments>
</comment>
<comment type="interaction">
    <interactant intactId="EBI-6257312">
        <id>Q9BVN2</id>
    </interactant>
    <interactant intactId="EBI-750487">
        <id>Q8WW24</id>
        <label>TEKT4</label>
    </interactant>
    <organismsDiffer>false</organismsDiffer>
    <experiments>5</experiments>
</comment>
<comment type="interaction">
    <interactant intactId="EBI-6257312">
        <id>Q9BVN2</id>
    </interactant>
    <interactant intactId="EBI-752030">
        <id>Q96A09</id>
        <label>TENT5B</label>
    </interactant>
    <organismsDiffer>false</organismsDiffer>
    <experiments>3</experiments>
</comment>
<comment type="interaction">
    <interactant intactId="EBI-6257312">
        <id>Q9BVN2</id>
    </interactant>
    <interactant intactId="EBI-11741437">
        <id>Q08117-2</id>
        <label>TLE5</label>
    </interactant>
    <organismsDiffer>false</organismsDiffer>
    <experiments>3</experiments>
</comment>
<comment type="interaction">
    <interactant intactId="EBI-6257312">
        <id>Q9BVN2</id>
    </interactant>
    <interactant intactId="EBI-8451480">
        <id>O75865-2</id>
        <label>TRAPPC6A</label>
    </interactant>
    <organismsDiffer>false</organismsDiffer>
    <experiments>3</experiments>
</comment>
<comment type="interaction">
    <interactant intactId="EBI-6257312">
        <id>Q9BVN2</id>
    </interactant>
    <interactant intactId="EBI-10259086">
        <id>Q86UV6-2</id>
        <label>TRIM74</label>
    </interactant>
    <organismsDiffer>false</organismsDiffer>
    <experiments>3</experiments>
</comment>
<comment type="interaction">
    <interactant intactId="EBI-6257312">
        <id>Q9BVN2</id>
    </interactant>
    <interactant intactId="EBI-3918381">
        <id>Q96PN8</id>
        <label>TSSK3</label>
    </interactant>
    <organismsDiffer>false</organismsDiffer>
    <experiments>5</experiments>
</comment>
<comment type="interaction">
    <interactant intactId="EBI-6257312">
        <id>Q9BVN2</id>
    </interactant>
    <interactant intactId="EBI-948354">
        <id>Q6DKK2</id>
        <label>TTC19</label>
    </interactant>
    <organismsDiffer>false</organismsDiffer>
    <experiments>3</experiments>
</comment>
<comment type="interaction">
    <interactant intactId="EBI-6257312">
        <id>Q9BVN2</id>
    </interactant>
    <interactant intactId="EBI-12006098">
        <id>Q86TV6</id>
        <label>TTC7B</label>
    </interactant>
    <organismsDiffer>false</organismsDiffer>
    <experiments>3</experiments>
</comment>
<comment type="interaction">
    <interactant intactId="EBI-6257312">
        <id>Q9BVN2</id>
    </interactant>
    <interactant intactId="EBI-12068150">
        <id>Q6NVU6</id>
        <label>UFSP1</label>
    </interactant>
    <organismsDiffer>false</organismsDiffer>
    <experiments>3</experiments>
</comment>
<comment type="interaction">
    <interactant intactId="EBI-6257312">
        <id>Q9BVN2</id>
    </interactant>
    <interactant intactId="EBI-11957216">
        <id>A8MV65-2</id>
        <label>VGLL3</label>
    </interactant>
    <organismsDiffer>false</organismsDiffer>
    <experiments>3</experiments>
</comment>
<comment type="interaction">
    <interactant intactId="EBI-6257312">
        <id>Q9BVN2</id>
    </interactant>
    <interactant intactId="EBI-12040603">
        <id>Q9NZC7-5</id>
        <label>WWOX</label>
    </interactant>
    <organismsDiffer>false</organismsDiffer>
    <experiments>3</experiments>
</comment>
<comment type="interaction">
    <interactant intactId="EBI-6257312">
        <id>Q9BVN2</id>
    </interactant>
    <interactant intactId="EBI-743923">
        <id>O00308</id>
        <label>WWP2</label>
    </interactant>
    <organismsDiffer>false</organismsDiffer>
    <experiments>3</experiments>
</comment>
<comment type="interaction">
    <interactant intactId="EBI-6257312">
        <id>Q9BVN2</id>
    </interactant>
    <interactant intactId="EBI-11963196">
        <id>Q15915</id>
        <label>ZIC1</label>
    </interactant>
    <organismsDiffer>false</organismsDiffer>
    <experiments>3</experiments>
</comment>
<comment type="interaction">
    <interactant intactId="EBI-6257312">
        <id>Q9BVN2</id>
    </interactant>
    <interactant intactId="EBI-12030590">
        <id>Q9H0C1</id>
        <label>ZMYND12</label>
    </interactant>
    <organismsDiffer>false</organismsDiffer>
    <experiments>5</experiments>
</comment>
<comment type="interaction">
    <interactant intactId="EBI-6257312">
        <id>Q9BVN2</id>
    </interactant>
    <interactant intactId="EBI-4395669">
        <id>Q6ZNG0</id>
        <label>ZNF620</label>
    </interactant>
    <organismsDiffer>false</organismsDiffer>
    <experiments>3</experiments>
</comment>
<comment type="interaction">
    <interactant intactId="EBI-6257312">
        <id>Q9BVN2</id>
    </interactant>
    <interactant intactId="EBI-12834294">
        <id>Q7L2R6-2</id>
        <label>ZNF765</label>
    </interactant>
    <organismsDiffer>false</organismsDiffer>
    <experiments>3</experiments>
</comment>
<comment type="interaction">
    <interactant intactId="EBI-6257312">
        <id>Q9BVN2</id>
    </interactant>
    <interactant intactId="EBI-12840750">
        <id>Q15935</id>
        <label>ZNF77</label>
    </interactant>
    <organismsDiffer>false</organismsDiffer>
    <experiments>3</experiments>
</comment>
<comment type="interaction">
    <interactant intactId="EBI-6257338">
        <id>Q9BVN2-2</id>
    </interactant>
    <interactant intactId="EBI-81279">
        <id>Q9Y6K9</id>
        <label>IKBKG</label>
    </interactant>
    <organismsDiffer>false</organismsDiffer>
    <experiments>4</experiments>
</comment>
<comment type="interaction">
    <interactant intactId="EBI-6257338">
        <id>Q9BVN2-2</id>
    </interactant>
    <interactant intactId="EBI-359276">
        <id>Q9Y4K3</id>
        <label>TRAF6</label>
    </interactant>
    <organismsDiffer>false</organismsDiffer>
    <experiments>2</experiments>
</comment>
<comment type="subcellular location">
    <subcellularLocation>
        <location evidence="5">Cytoplasm</location>
    </subcellularLocation>
    <subcellularLocation>
        <location evidence="5">Nucleus</location>
    </subcellularLocation>
    <subcellularLocation>
        <location evidence="1">Cytoplasm</location>
        <location evidence="1">Cytoskeleton</location>
    </subcellularLocation>
    <subcellularLocation>
        <location evidence="1">Cytoplasmic vesicle</location>
    </subcellularLocation>
    <subcellularLocation>
        <location evidence="1">Early endosome</location>
    </subcellularLocation>
    <subcellularLocation>
        <location evidence="1">Postsynaptic density</location>
    </subcellularLocation>
    <subcellularLocation>
        <location evidence="1">Golgi apparatus</location>
    </subcellularLocation>
    <text evidence="1 5">Translocated to the nuclear envelope upon stimulation with NGF (PubMed:15024033). Associated with membranes and microtubules (By similarity).</text>
</comment>
<comment type="alternative products">
    <event type="alternative splicing"/>
    <isoform>
        <id>Q9BVN2-1</id>
        <name>1</name>
        <sequence type="displayed"/>
    </isoform>
    <isoform>
        <id>Q9BVN2-2</id>
        <name>2</name>
        <sequence type="described" ref="VSP_010855"/>
    </isoform>
    <isoform>
        <id>Q9BVN2-3</id>
        <name>3</name>
        <sequence type="described" ref="VSP_054052"/>
    </isoform>
    <isoform>
        <id>Q9BVN2-4</id>
        <name>4</name>
        <sequence type="described" ref="VSP_054053"/>
    </isoform>
</comment>
<comment type="tissue specificity">
    <text evidence="5">Predominantly expressed in brain.</text>
</comment>
<comment type="domain">
    <text evidence="5">The RUN domain is necessary for NGF induced nuclear redistribution.</text>
</comment>
<comment type="PTM">
    <text evidence="5">Phosphorylated on serine residues following nuclear translocation.</text>
</comment>
<comment type="PTM">
    <text evidence="6">Polyubiquitinated; polyubiquitination involves TRAF6.</text>
</comment>
<comment type="sequence caution" evidence="15">
    <conflict type="erroneous initiation">
        <sequence resource="EMBL-CDS" id="AAH52277"/>
    </conflict>
    <text>Truncated N-terminus.</text>
</comment>
<comment type="sequence caution" evidence="15">
    <conflict type="erroneous initiation">
        <sequence resource="EMBL-CDS" id="BAG54191"/>
    </conflict>
    <text>Truncated N-terminus.</text>
</comment>
<keyword id="KW-0002">3D-structure</keyword>
<keyword id="KW-0025">Alternative splicing</keyword>
<keyword id="KW-0963">Cytoplasm</keyword>
<keyword id="KW-0968">Cytoplasmic vesicle</keyword>
<keyword id="KW-0206">Cytoskeleton</keyword>
<keyword id="KW-0967">Endosome</keyword>
<keyword id="KW-0333">Golgi apparatus</keyword>
<keyword id="KW-0493">Microtubule</keyword>
<keyword id="KW-0539">Nucleus</keyword>
<keyword id="KW-0597">Phosphoprotein</keyword>
<keyword id="KW-1267">Proteomics identification</keyword>
<keyword id="KW-1185">Reference proteome</keyword>
<keyword id="KW-0728">SH3 domain</keyword>
<keyword id="KW-0770">Synapse</keyword>
<keyword id="KW-0832">Ubl conjugation</keyword>
<reference key="1">
    <citation type="journal article" date="2000" name="Biochim. Biophys. Acta">
        <title>Molecular cloning and characterization of a novel human gene (NESCA) which encodes a putative adapter protein containing SH3.</title>
        <authorList>
            <person name="Matsuda S."/>
            <person name="Miyazaki K."/>
            <person name="Ichigotani Y."/>
            <person name="Kurata H."/>
            <person name="Takenouchi Y."/>
            <person name="Yamamoto T."/>
            <person name="Nimura Y."/>
            <person name="Irimura T."/>
            <person name="Nakatsugawa S."/>
            <person name="Hamaguchi M."/>
        </authorList>
    </citation>
    <scope>NUCLEOTIDE SEQUENCE [MRNA] (ISOFORM 2)</scope>
</reference>
<reference key="2">
    <citation type="journal article" date="2004" name="Nat. Genet.">
        <title>Complete sequencing and characterization of 21,243 full-length human cDNAs.</title>
        <authorList>
            <person name="Ota T."/>
            <person name="Suzuki Y."/>
            <person name="Nishikawa T."/>
            <person name="Otsuki T."/>
            <person name="Sugiyama T."/>
            <person name="Irie R."/>
            <person name="Wakamatsu A."/>
            <person name="Hayashi K."/>
            <person name="Sato H."/>
            <person name="Nagai K."/>
            <person name="Kimura K."/>
            <person name="Makita H."/>
            <person name="Sekine M."/>
            <person name="Obayashi M."/>
            <person name="Nishi T."/>
            <person name="Shibahara T."/>
            <person name="Tanaka T."/>
            <person name="Ishii S."/>
            <person name="Yamamoto J."/>
            <person name="Saito K."/>
            <person name="Kawai Y."/>
            <person name="Isono Y."/>
            <person name="Nakamura Y."/>
            <person name="Nagahari K."/>
            <person name="Murakami K."/>
            <person name="Yasuda T."/>
            <person name="Iwayanagi T."/>
            <person name="Wagatsuma M."/>
            <person name="Shiratori A."/>
            <person name="Sudo H."/>
            <person name="Hosoiri T."/>
            <person name="Kaku Y."/>
            <person name="Kodaira H."/>
            <person name="Kondo H."/>
            <person name="Sugawara M."/>
            <person name="Takahashi M."/>
            <person name="Kanda K."/>
            <person name="Yokoi T."/>
            <person name="Furuya T."/>
            <person name="Kikkawa E."/>
            <person name="Omura Y."/>
            <person name="Abe K."/>
            <person name="Kamihara K."/>
            <person name="Katsuta N."/>
            <person name="Sato K."/>
            <person name="Tanikawa M."/>
            <person name="Yamazaki M."/>
            <person name="Ninomiya K."/>
            <person name="Ishibashi T."/>
            <person name="Yamashita H."/>
            <person name="Murakawa K."/>
            <person name="Fujimori K."/>
            <person name="Tanai H."/>
            <person name="Kimata M."/>
            <person name="Watanabe M."/>
            <person name="Hiraoka S."/>
            <person name="Chiba Y."/>
            <person name="Ishida S."/>
            <person name="Ono Y."/>
            <person name="Takiguchi S."/>
            <person name="Watanabe S."/>
            <person name="Yosida M."/>
            <person name="Hotuta T."/>
            <person name="Kusano J."/>
            <person name="Kanehori K."/>
            <person name="Takahashi-Fujii A."/>
            <person name="Hara H."/>
            <person name="Tanase T.-O."/>
            <person name="Nomura Y."/>
            <person name="Togiya S."/>
            <person name="Komai F."/>
            <person name="Hara R."/>
            <person name="Takeuchi K."/>
            <person name="Arita M."/>
            <person name="Imose N."/>
            <person name="Musashino K."/>
            <person name="Yuuki H."/>
            <person name="Oshima A."/>
            <person name="Sasaki N."/>
            <person name="Aotsuka S."/>
            <person name="Yoshikawa Y."/>
            <person name="Matsunawa H."/>
            <person name="Ichihara T."/>
            <person name="Shiohata N."/>
            <person name="Sano S."/>
            <person name="Moriya S."/>
            <person name="Momiyama H."/>
            <person name="Satoh N."/>
            <person name="Takami S."/>
            <person name="Terashima Y."/>
            <person name="Suzuki O."/>
            <person name="Nakagawa S."/>
            <person name="Senoh A."/>
            <person name="Mizoguchi H."/>
            <person name="Goto Y."/>
            <person name="Shimizu F."/>
            <person name="Wakebe H."/>
            <person name="Hishigaki H."/>
            <person name="Watanabe T."/>
            <person name="Sugiyama A."/>
            <person name="Takemoto M."/>
            <person name="Kawakami B."/>
            <person name="Yamazaki M."/>
            <person name="Watanabe K."/>
            <person name="Kumagai A."/>
            <person name="Itakura S."/>
            <person name="Fukuzumi Y."/>
            <person name="Fujimori Y."/>
            <person name="Komiyama M."/>
            <person name="Tashiro H."/>
            <person name="Tanigami A."/>
            <person name="Fujiwara T."/>
            <person name="Ono T."/>
            <person name="Yamada K."/>
            <person name="Fujii Y."/>
            <person name="Ozaki K."/>
            <person name="Hirao M."/>
            <person name="Ohmori Y."/>
            <person name="Kawabata A."/>
            <person name="Hikiji T."/>
            <person name="Kobatake N."/>
            <person name="Inagaki H."/>
            <person name="Ikema Y."/>
            <person name="Okamoto S."/>
            <person name="Okitani R."/>
            <person name="Kawakami T."/>
            <person name="Noguchi S."/>
            <person name="Itoh T."/>
            <person name="Shigeta K."/>
            <person name="Senba T."/>
            <person name="Matsumura K."/>
            <person name="Nakajima Y."/>
            <person name="Mizuno T."/>
            <person name="Morinaga M."/>
            <person name="Sasaki M."/>
            <person name="Togashi T."/>
            <person name="Oyama M."/>
            <person name="Hata H."/>
            <person name="Watanabe M."/>
            <person name="Komatsu T."/>
            <person name="Mizushima-Sugano J."/>
            <person name="Satoh T."/>
            <person name="Shirai Y."/>
            <person name="Takahashi Y."/>
            <person name="Nakagawa K."/>
            <person name="Okumura K."/>
            <person name="Nagase T."/>
            <person name="Nomura N."/>
            <person name="Kikuchi H."/>
            <person name="Masuho Y."/>
            <person name="Yamashita R."/>
            <person name="Nakai K."/>
            <person name="Yada T."/>
            <person name="Nakamura Y."/>
            <person name="Ohara O."/>
            <person name="Isogai T."/>
            <person name="Sugano S."/>
        </authorList>
    </citation>
    <scope>NUCLEOTIDE SEQUENCE [LARGE SCALE MRNA] (ISOFORMS 2 AND 4)</scope>
</reference>
<reference key="3">
    <citation type="journal article" date="2005" name="DNA Res.">
        <title>Signal sequence and keyword trap in silico for selection of full-length human cDNAs encoding secretion or membrane proteins from oligo-capped cDNA libraries.</title>
        <authorList>
            <person name="Otsuki T."/>
            <person name="Ota T."/>
            <person name="Nishikawa T."/>
            <person name="Hayashi K."/>
            <person name="Suzuki Y."/>
            <person name="Yamamoto J."/>
            <person name="Wakamatsu A."/>
            <person name="Kimura K."/>
            <person name="Sakamoto K."/>
            <person name="Hatano N."/>
            <person name="Kawai Y."/>
            <person name="Ishii S."/>
            <person name="Saito K."/>
            <person name="Kojima S."/>
            <person name="Sugiyama T."/>
            <person name="Ono T."/>
            <person name="Okano K."/>
            <person name="Yoshikawa Y."/>
            <person name="Aotsuka S."/>
            <person name="Sasaki N."/>
            <person name="Hattori A."/>
            <person name="Okumura K."/>
            <person name="Nagai K."/>
            <person name="Sugano S."/>
            <person name="Isogai T."/>
        </authorList>
    </citation>
    <scope>NUCLEOTIDE SEQUENCE [LARGE SCALE MRNA] (ISOFORM 2)</scope>
</reference>
<reference key="4">
    <citation type="journal article" date="2007" name="BMC Genomics">
        <title>The full-ORF clone resource of the German cDNA consortium.</title>
        <authorList>
            <person name="Bechtel S."/>
            <person name="Rosenfelder H."/>
            <person name="Duda A."/>
            <person name="Schmidt C.P."/>
            <person name="Ernst U."/>
            <person name="Wellenreuther R."/>
            <person name="Mehrle A."/>
            <person name="Schuster C."/>
            <person name="Bahr A."/>
            <person name="Bloecker H."/>
            <person name="Heubner D."/>
            <person name="Hoerlein A."/>
            <person name="Michel G."/>
            <person name="Wedler H."/>
            <person name="Koehrer K."/>
            <person name="Ottenwaelder B."/>
            <person name="Poustka A."/>
            <person name="Wiemann S."/>
            <person name="Schupp I."/>
        </authorList>
    </citation>
    <scope>NUCLEOTIDE SEQUENCE [LARGE SCALE MRNA] (ISOFORM 2)</scope>
    <source>
        <tissue>Brain</tissue>
        <tissue>Endometrium</tissue>
    </source>
</reference>
<reference key="5">
    <citation type="journal article" date="2006" name="Nature">
        <title>The DNA sequence and biological annotation of human chromosome 1.</title>
        <authorList>
            <person name="Gregory S.G."/>
            <person name="Barlow K.F."/>
            <person name="McLay K.E."/>
            <person name="Kaul R."/>
            <person name="Swarbreck D."/>
            <person name="Dunham A."/>
            <person name="Scott C.E."/>
            <person name="Howe K.L."/>
            <person name="Woodfine K."/>
            <person name="Spencer C.C.A."/>
            <person name="Jones M.C."/>
            <person name="Gillson C."/>
            <person name="Searle S."/>
            <person name="Zhou Y."/>
            <person name="Kokocinski F."/>
            <person name="McDonald L."/>
            <person name="Evans R."/>
            <person name="Phillips K."/>
            <person name="Atkinson A."/>
            <person name="Cooper R."/>
            <person name="Jones C."/>
            <person name="Hall R.E."/>
            <person name="Andrews T.D."/>
            <person name="Lloyd C."/>
            <person name="Ainscough R."/>
            <person name="Almeida J.P."/>
            <person name="Ambrose K.D."/>
            <person name="Anderson F."/>
            <person name="Andrew R.W."/>
            <person name="Ashwell R.I.S."/>
            <person name="Aubin K."/>
            <person name="Babbage A.K."/>
            <person name="Bagguley C.L."/>
            <person name="Bailey J."/>
            <person name="Beasley H."/>
            <person name="Bethel G."/>
            <person name="Bird C.P."/>
            <person name="Bray-Allen S."/>
            <person name="Brown J.Y."/>
            <person name="Brown A.J."/>
            <person name="Buckley D."/>
            <person name="Burton J."/>
            <person name="Bye J."/>
            <person name="Carder C."/>
            <person name="Chapman J.C."/>
            <person name="Clark S.Y."/>
            <person name="Clarke G."/>
            <person name="Clee C."/>
            <person name="Cobley V."/>
            <person name="Collier R.E."/>
            <person name="Corby N."/>
            <person name="Coville G.J."/>
            <person name="Davies J."/>
            <person name="Deadman R."/>
            <person name="Dunn M."/>
            <person name="Earthrowl M."/>
            <person name="Ellington A.G."/>
            <person name="Errington H."/>
            <person name="Frankish A."/>
            <person name="Frankland J."/>
            <person name="French L."/>
            <person name="Garner P."/>
            <person name="Garnett J."/>
            <person name="Gay L."/>
            <person name="Ghori M.R.J."/>
            <person name="Gibson R."/>
            <person name="Gilby L.M."/>
            <person name="Gillett W."/>
            <person name="Glithero R.J."/>
            <person name="Grafham D.V."/>
            <person name="Griffiths C."/>
            <person name="Griffiths-Jones S."/>
            <person name="Grocock R."/>
            <person name="Hammond S."/>
            <person name="Harrison E.S.I."/>
            <person name="Hart E."/>
            <person name="Haugen E."/>
            <person name="Heath P.D."/>
            <person name="Holmes S."/>
            <person name="Holt K."/>
            <person name="Howden P.J."/>
            <person name="Hunt A.R."/>
            <person name="Hunt S.E."/>
            <person name="Hunter G."/>
            <person name="Isherwood J."/>
            <person name="James R."/>
            <person name="Johnson C."/>
            <person name="Johnson D."/>
            <person name="Joy A."/>
            <person name="Kay M."/>
            <person name="Kershaw J.K."/>
            <person name="Kibukawa M."/>
            <person name="Kimberley A.M."/>
            <person name="King A."/>
            <person name="Knights A.J."/>
            <person name="Lad H."/>
            <person name="Laird G."/>
            <person name="Lawlor S."/>
            <person name="Leongamornlert D.A."/>
            <person name="Lloyd D.M."/>
            <person name="Loveland J."/>
            <person name="Lovell J."/>
            <person name="Lush M.J."/>
            <person name="Lyne R."/>
            <person name="Martin S."/>
            <person name="Mashreghi-Mohammadi M."/>
            <person name="Matthews L."/>
            <person name="Matthews N.S.W."/>
            <person name="McLaren S."/>
            <person name="Milne S."/>
            <person name="Mistry S."/>
            <person name="Moore M.J.F."/>
            <person name="Nickerson T."/>
            <person name="O'Dell C.N."/>
            <person name="Oliver K."/>
            <person name="Palmeiri A."/>
            <person name="Palmer S.A."/>
            <person name="Parker A."/>
            <person name="Patel D."/>
            <person name="Pearce A.V."/>
            <person name="Peck A.I."/>
            <person name="Pelan S."/>
            <person name="Phelps K."/>
            <person name="Phillimore B.J."/>
            <person name="Plumb R."/>
            <person name="Rajan J."/>
            <person name="Raymond C."/>
            <person name="Rouse G."/>
            <person name="Saenphimmachak C."/>
            <person name="Sehra H.K."/>
            <person name="Sheridan E."/>
            <person name="Shownkeen R."/>
            <person name="Sims S."/>
            <person name="Skuce C.D."/>
            <person name="Smith M."/>
            <person name="Steward C."/>
            <person name="Subramanian S."/>
            <person name="Sycamore N."/>
            <person name="Tracey A."/>
            <person name="Tromans A."/>
            <person name="Van Helmond Z."/>
            <person name="Wall M."/>
            <person name="Wallis J.M."/>
            <person name="White S."/>
            <person name="Whitehead S.L."/>
            <person name="Wilkinson J.E."/>
            <person name="Willey D.L."/>
            <person name="Williams H."/>
            <person name="Wilming L."/>
            <person name="Wray P.W."/>
            <person name="Wu Z."/>
            <person name="Coulson A."/>
            <person name="Vaudin M."/>
            <person name="Sulston J.E."/>
            <person name="Durbin R.M."/>
            <person name="Hubbard T."/>
            <person name="Wooster R."/>
            <person name="Dunham I."/>
            <person name="Carter N.P."/>
            <person name="McVean G."/>
            <person name="Ross M.T."/>
            <person name="Harrow J."/>
            <person name="Olson M.V."/>
            <person name="Beck S."/>
            <person name="Rogers J."/>
            <person name="Bentley D.R."/>
        </authorList>
    </citation>
    <scope>NUCLEOTIDE SEQUENCE [LARGE SCALE GENOMIC DNA]</scope>
</reference>
<reference key="6">
    <citation type="submission" date="2005-09" db="EMBL/GenBank/DDBJ databases">
        <authorList>
            <person name="Mural R.J."/>
            <person name="Istrail S."/>
            <person name="Sutton G."/>
            <person name="Florea L."/>
            <person name="Halpern A.L."/>
            <person name="Mobarry C.M."/>
            <person name="Lippert R."/>
            <person name="Walenz B."/>
            <person name="Shatkay H."/>
            <person name="Dew I."/>
            <person name="Miller J.R."/>
            <person name="Flanigan M.J."/>
            <person name="Edwards N.J."/>
            <person name="Bolanos R."/>
            <person name="Fasulo D."/>
            <person name="Halldorsson B.V."/>
            <person name="Hannenhalli S."/>
            <person name="Turner R."/>
            <person name="Yooseph S."/>
            <person name="Lu F."/>
            <person name="Nusskern D.R."/>
            <person name="Shue B.C."/>
            <person name="Zheng X.H."/>
            <person name="Zhong F."/>
            <person name="Delcher A.L."/>
            <person name="Huson D.H."/>
            <person name="Kravitz S.A."/>
            <person name="Mouchard L."/>
            <person name="Reinert K."/>
            <person name="Remington K.A."/>
            <person name="Clark A.G."/>
            <person name="Waterman M.S."/>
            <person name="Eichler E.E."/>
            <person name="Adams M.D."/>
            <person name="Hunkapiller M.W."/>
            <person name="Myers E.W."/>
            <person name="Venter J.C."/>
        </authorList>
    </citation>
    <scope>NUCLEOTIDE SEQUENCE [LARGE SCALE GENOMIC DNA]</scope>
</reference>
<reference key="7">
    <citation type="journal article" date="2004" name="Genome Res.">
        <title>The status, quality, and expansion of the NIH full-length cDNA project: the Mammalian Gene Collection (MGC).</title>
        <authorList>
            <consortium name="The MGC Project Team"/>
        </authorList>
    </citation>
    <scope>NUCLEOTIDE SEQUENCE [LARGE SCALE MRNA] (ISOFORMS 1; 2 AND 3)</scope>
    <source>
        <tissue>Lung</tissue>
        <tissue>Placenta</tissue>
    </source>
</reference>
<reference key="8">
    <citation type="journal article" date="2004" name="J. Cell Biol.">
        <title>Nesca, a novel adapter, translocates to the nuclear envelope and regulates neurotrophin-induced neurite outgrowth.</title>
        <authorList>
            <person name="MacDonald J.I.S."/>
            <person name="Kubu C.J."/>
            <person name="Meakin S.O."/>
        </authorList>
    </citation>
    <scope>FUNCTION</scope>
    <scope>SUBCELLULAR LOCATION</scope>
    <scope>TISSUE SPECIFICITY</scope>
    <scope>MUTAGENESIS OF LEU-531</scope>
</reference>
<reference key="9">
    <citation type="journal article" date="2009" name="J. Cell. Physiol.">
        <title>NESCA: a new NEMO/IKKgamma and TRAF6 interacting protein.</title>
        <authorList>
            <person name="Napolitano G."/>
            <person name="Mirra S."/>
            <person name="Monfregola J."/>
            <person name="Lavorgna A."/>
            <person name="Leonardi A."/>
            <person name="Ursini M.V."/>
        </authorList>
    </citation>
    <scope>FUNCTION</scope>
    <scope>INTERACTION WITH IKBKG AND TRAF6</scope>
    <scope>UBIQUITINATION</scope>
</reference>
<reference key="10">
    <citation type="journal article" date="2018" name="Nat. Commun.">
        <title>AP-4 vesicles contribute to spatial control of autophagy via RUSC-dependent peripheral delivery of ATG9A.</title>
        <authorList>
            <person name="Davies A.K."/>
            <person name="Itzhak D.N."/>
            <person name="Edgar J.R."/>
            <person name="Archuleta T.L."/>
            <person name="Hirst J."/>
            <person name="Jackson L.P."/>
            <person name="Robinson M.S."/>
            <person name="Borner G.H.H."/>
        </authorList>
    </citation>
    <scope>FUNCTION</scope>
    <scope>IDENTIFICATION IN THE AP-4 COMPLEX</scope>
</reference>
<proteinExistence type="evidence at protein level"/>
<dbReference type="EMBL" id="AB026894">
    <property type="protein sequence ID" value="BAA77507.2"/>
    <property type="molecule type" value="mRNA"/>
</dbReference>
<dbReference type="EMBL" id="AL080083">
    <property type="protein sequence ID" value="CAB45702.1"/>
    <property type="molecule type" value="mRNA"/>
</dbReference>
<dbReference type="EMBL" id="AK314559">
    <property type="protein sequence ID" value="BAG37144.1"/>
    <property type="molecule type" value="mRNA"/>
</dbReference>
<dbReference type="EMBL" id="AK074982">
    <property type="protein sequence ID" value="BAG52045.1"/>
    <property type="molecule type" value="mRNA"/>
</dbReference>
<dbReference type="EMBL" id="AK055451">
    <property type="status" value="NOT_ANNOTATED_CDS"/>
    <property type="molecule type" value="mRNA"/>
</dbReference>
<dbReference type="EMBL" id="AK125378">
    <property type="protein sequence ID" value="BAG54191.1"/>
    <property type="status" value="ALT_INIT"/>
    <property type="molecule type" value="mRNA"/>
</dbReference>
<dbReference type="EMBL" id="BX640612">
    <property type="protein sequence ID" value="CAE45718.1"/>
    <property type="molecule type" value="mRNA"/>
</dbReference>
<dbReference type="EMBL" id="AL139410">
    <property type="status" value="NOT_ANNOTATED_CDS"/>
    <property type="molecule type" value="Genomic_DNA"/>
</dbReference>
<dbReference type="EMBL" id="CH471121">
    <property type="protein sequence ID" value="EAW53069.1"/>
    <property type="molecule type" value="Genomic_DNA"/>
</dbReference>
<dbReference type="EMBL" id="CH471121">
    <property type="protein sequence ID" value="EAW53071.1"/>
    <property type="molecule type" value="Genomic_DNA"/>
</dbReference>
<dbReference type="EMBL" id="CH471121">
    <property type="protein sequence ID" value="EAW53072.1"/>
    <property type="molecule type" value="Genomic_DNA"/>
</dbReference>
<dbReference type="EMBL" id="BC001045">
    <property type="protein sequence ID" value="AAH01045.1"/>
    <property type="molecule type" value="mRNA"/>
</dbReference>
<dbReference type="EMBL" id="BC025680">
    <property type="status" value="NOT_ANNOTATED_CDS"/>
    <property type="molecule type" value="mRNA"/>
</dbReference>
<dbReference type="EMBL" id="BC052277">
    <property type="protein sequence ID" value="AAH52277.1"/>
    <property type="status" value="ALT_INIT"/>
    <property type="molecule type" value="mRNA"/>
</dbReference>
<dbReference type="CCDS" id="CCDS1112.1">
    <molecule id="Q9BVN2-2"/>
</dbReference>
<dbReference type="CCDS" id="CCDS41410.1">
    <molecule id="Q9BVN2-1"/>
</dbReference>
<dbReference type="CCDS" id="CCDS41411.1">
    <molecule id="Q9BVN2-4"/>
</dbReference>
<dbReference type="CCDS" id="CCDS41412.1">
    <molecule id="Q9BVN2-3"/>
</dbReference>
<dbReference type="PIR" id="T12473">
    <property type="entry name" value="T12473"/>
</dbReference>
<dbReference type="RefSeq" id="NP_001098673.1">
    <molecule id="Q9BVN2-1"/>
    <property type="nucleotide sequence ID" value="NM_001105203.2"/>
</dbReference>
<dbReference type="RefSeq" id="NP_001098674.1">
    <molecule id="Q9BVN2-4"/>
    <property type="nucleotide sequence ID" value="NM_001105204.2"/>
</dbReference>
<dbReference type="RefSeq" id="NP_001098675.1">
    <molecule id="Q9BVN2-3"/>
    <property type="nucleotide sequence ID" value="NM_001105205.1"/>
</dbReference>
<dbReference type="RefSeq" id="NP_001265156.1">
    <property type="nucleotide sequence ID" value="NM_001278227.1"/>
</dbReference>
<dbReference type="RefSeq" id="NP_001265157.1">
    <property type="nucleotide sequence ID" value="NM_001278228.1"/>
</dbReference>
<dbReference type="RefSeq" id="NP_001265158.1">
    <property type="nucleotide sequence ID" value="NM_001278229.1"/>
</dbReference>
<dbReference type="RefSeq" id="NP_001265159.1">
    <molecule id="Q9BVN2-2"/>
    <property type="nucleotide sequence ID" value="NM_001278230.2"/>
</dbReference>
<dbReference type="RefSeq" id="NP_055143.2">
    <molecule id="Q9BVN2-2"/>
    <property type="nucleotide sequence ID" value="NM_014328.4"/>
</dbReference>
<dbReference type="RefSeq" id="XP_006711320.1">
    <molecule id="Q9BVN2-2"/>
    <property type="nucleotide sequence ID" value="XM_006711257.2"/>
</dbReference>
<dbReference type="RefSeq" id="XP_016856381.1">
    <property type="nucleotide sequence ID" value="XM_017000892.1"/>
</dbReference>
<dbReference type="RefSeq" id="XP_047272600.1">
    <molecule id="Q9BVN2-1"/>
    <property type="nucleotide sequence ID" value="XM_047416644.1"/>
</dbReference>
<dbReference type="RefSeq" id="XP_054191703.1">
    <molecule id="Q9BVN2-2"/>
    <property type="nucleotide sequence ID" value="XM_054335728.1"/>
</dbReference>
<dbReference type="PDB" id="4GIW">
    <property type="method" value="X-ray"/>
    <property type="resolution" value="2.00 A"/>
    <property type="chains" value="A/B=477-666"/>
</dbReference>
<dbReference type="PDBsum" id="4GIW"/>
<dbReference type="SMR" id="Q9BVN2"/>
<dbReference type="BioGRID" id="117155">
    <property type="interactions" value="105"/>
</dbReference>
<dbReference type="FunCoup" id="Q9BVN2">
    <property type="interactions" value="360"/>
</dbReference>
<dbReference type="IntAct" id="Q9BVN2">
    <property type="interactions" value="106"/>
</dbReference>
<dbReference type="MINT" id="Q9BVN2"/>
<dbReference type="STRING" id="9606.ENSP00000357336"/>
<dbReference type="GlyGen" id="Q9BVN2">
    <property type="glycosylation" value="2 sites, 2 O-linked glycans (1 site)"/>
</dbReference>
<dbReference type="iPTMnet" id="Q9BVN2"/>
<dbReference type="PhosphoSitePlus" id="Q9BVN2"/>
<dbReference type="BioMuta" id="RUSC1"/>
<dbReference type="DMDM" id="160380712"/>
<dbReference type="jPOST" id="Q9BVN2"/>
<dbReference type="MassIVE" id="Q9BVN2"/>
<dbReference type="PaxDb" id="9606-ENSP00000357336"/>
<dbReference type="PeptideAtlas" id="Q9BVN2"/>
<dbReference type="ProteomicsDB" id="64815"/>
<dbReference type="ProteomicsDB" id="79221">
    <molecule id="Q9BVN2-1"/>
</dbReference>
<dbReference type="ProteomicsDB" id="79222">
    <molecule id="Q9BVN2-2"/>
</dbReference>
<dbReference type="Pumba" id="Q9BVN2"/>
<dbReference type="Antibodypedia" id="34192">
    <property type="antibodies" value="117 antibodies from 23 providers"/>
</dbReference>
<dbReference type="DNASU" id="23623"/>
<dbReference type="Ensembl" id="ENST00000292254.8">
    <molecule id="Q9BVN2-2"/>
    <property type="protein sequence ID" value="ENSP00000292254.4"/>
    <property type="gene ID" value="ENSG00000160753.17"/>
</dbReference>
<dbReference type="Ensembl" id="ENST00000368347.8">
    <molecule id="Q9BVN2-3"/>
    <property type="protein sequence ID" value="ENSP00000357331.4"/>
    <property type="gene ID" value="ENSG00000160753.17"/>
</dbReference>
<dbReference type="Ensembl" id="ENST00000368349.8">
    <molecule id="Q9BVN2-2"/>
    <property type="protein sequence ID" value="ENSP00000357333.4"/>
    <property type="gene ID" value="ENSG00000160753.17"/>
</dbReference>
<dbReference type="Ensembl" id="ENST00000368352.10">
    <molecule id="Q9BVN2-1"/>
    <property type="protein sequence ID" value="ENSP00000357336.5"/>
    <property type="gene ID" value="ENSG00000160753.17"/>
</dbReference>
<dbReference type="Ensembl" id="ENST00000368354.7">
    <molecule id="Q9BVN2-4"/>
    <property type="protein sequence ID" value="ENSP00000357338.3"/>
    <property type="gene ID" value="ENSG00000160753.17"/>
</dbReference>
<dbReference type="GeneID" id="23623"/>
<dbReference type="KEGG" id="hsa:23623"/>
<dbReference type="MANE-Select" id="ENST00000368352.10">
    <property type="protein sequence ID" value="ENSP00000357336.5"/>
    <property type="RefSeq nucleotide sequence ID" value="NM_001105203.2"/>
    <property type="RefSeq protein sequence ID" value="NP_001098673.1"/>
</dbReference>
<dbReference type="UCSC" id="uc001fkj.3">
    <molecule id="Q9BVN2-1"/>
    <property type="organism name" value="human"/>
</dbReference>
<dbReference type="AGR" id="HGNC:17153"/>
<dbReference type="CTD" id="23623"/>
<dbReference type="DisGeNET" id="23623"/>
<dbReference type="GeneCards" id="RUSC1"/>
<dbReference type="HGNC" id="HGNC:17153">
    <property type="gene designation" value="RUSC1"/>
</dbReference>
<dbReference type="HPA" id="ENSG00000160753">
    <property type="expression patterns" value="Low tissue specificity"/>
</dbReference>
<dbReference type="MIM" id="617318">
    <property type="type" value="gene"/>
</dbReference>
<dbReference type="neXtProt" id="NX_Q9BVN2"/>
<dbReference type="OpenTargets" id="ENSG00000160753"/>
<dbReference type="PharmGKB" id="PA134947113"/>
<dbReference type="VEuPathDB" id="HostDB:ENSG00000160753"/>
<dbReference type="eggNOG" id="ENOG502QWTC">
    <property type="taxonomic scope" value="Eukaryota"/>
</dbReference>
<dbReference type="GeneTree" id="ENSGT00900000141033"/>
<dbReference type="HOGENOM" id="CLU_014918_0_0_1"/>
<dbReference type="InParanoid" id="Q9BVN2"/>
<dbReference type="OMA" id="AQEDFPC"/>
<dbReference type="OrthoDB" id="9884296at2759"/>
<dbReference type="PAN-GO" id="Q9BVN2">
    <property type="GO annotations" value="1 GO annotation based on evolutionary models"/>
</dbReference>
<dbReference type="PhylomeDB" id="Q9BVN2"/>
<dbReference type="TreeFam" id="TF332235"/>
<dbReference type="PathwayCommons" id="Q9BVN2"/>
<dbReference type="SignaLink" id="Q9BVN2"/>
<dbReference type="SIGNOR" id="Q9BVN2"/>
<dbReference type="BioGRID-ORCS" id="23623">
    <property type="hits" value="24 hits in 1164 CRISPR screens"/>
</dbReference>
<dbReference type="ChiTaRS" id="RUSC1">
    <property type="organism name" value="human"/>
</dbReference>
<dbReference type="EvolutionaryTrace" id="Q9BVN2"/>
<dbReference type="GenomeRNAi" id="23623"/>
<dbReference type="Pharos" id="Q9BVN2">
    <property type="development level" value="Tbio"/>
</dbReference>
<dbReference type="PRO" id="PR:Q9BVN2"/>
<dbReference type="Proteomes" id="UP000005640">
    <property type="component" value="Chromosome 1"/>
</dbReference>
<dbReference type="RNAct" id="Q9BVN2">
    <property type="molecule type" value="protein"/>
</dbReference>
<dbReference type="Bgee" id="ENSG00000160753">
    <property type="expression patterns" value="Expressed in right hemisphere of cerebellum and 191 other cell types or tissues"/>
</dbReference>
<dbReference type="ExpressionAtlas" id="Q9BVN2">
    <property type="expression patterns" value="baseline and differential"/>
</dbReference>
<dbReference type="GO" id="GO:0031410">
    <property type="term" value="C:cytoplasmic vesicle"/>
    <property type="evidence" value="ECO:0000250"/>
    <property type="project" value="UniProtKB"/>
</dbReference>
<dbReference type="GO" id="GO:0005829">
    <property type="term" value="C:cytosol"/>
    <property type="evidence" value="ECO:0000314"/>
    <property type="project" value="HPA"/>
</dbReference>
<dbReference type="GO" id="GO:0005769">
    <property type="term" value="C:early endosome"/>
    <property type="evidence" value="ECO:0000250"/>
    <property type="project" value="UniProtKB"/>
</dbReference>
<dbReference type="GO" id="GO:0005794">
    <property type="term" value="C:Golgi apparatus"/>
    <property type="evidence" value="ECO:0000250"/>
    <property type="project" value="UniProtKB"/>
</dbReference>
<dbReference type="GO" id="GO:0005874">
    <property type="term" value="C:microtubule"/>
    <property type="evidence" value="ECO:0007669"/>
    <property type="project" value="UniProtKB-KW"/>
</dbReference>
<dbReference type="GO" id="GO:0015630">
    <property type="term" value="C:microtubule cytoskeleton"/>
    <property type="evidence" value="ECO:0000250"/>
    <property type="project" value="UniProtKB"/>
</dbReference>
<dbReference type="GO" id="GO:0005634">
    <property type="term" value="C:nucleus"/>
    <property type="evidence" value="ECO:0007669"/>
    <property type="project" value="UniProtKB-SubCell"/>
</dbReference>
<dbReference type="GO" id="GO:0014069">
    <property type="term" value="C:postsynaptic density"/>
    <property type="evidence" value="ECO:0007669"/>
    <property type="project" value="UniProtKB-SubCell"/>
</dbReference>
<dbReference type="GO" id="GO:0003779">
    <property type="term" value="F:actin binding"/>
    <property type="evidence" value="ECO:0000250"/>
    <property type="project" value="UniProtKB"/>
</dbReference>
<dbReference type="GO" id="GO:0000209">
    <property type="term" value="P:protein polyubiquitination"/>
    <property type="evidence" value="ECO:0000314"/>
    <property type="project" value="UniProtKB"/>
</dbReference>
<dbReference type="CDD" id="cd17701">
    <property type="entry name" value="RUN_RUSC1"/>
    <property type="match status" value="1"/>
</dbReference>
<dbReference type="CDD" id="cd11958">
    <property type="entry name" value="SH3_RUSC1"/>
    <property type="match status" value="1"/>
</dbReference>
<dbReference type="FunFam" id="1.20.58.900:FF:000006">
    <property type="entry name" value="RUN and SH3 domain containing 1"/>
    <property type="match status" value="1"/>
</dbReference>
<dbReference type="FunFam" id="2.30.30.40:FF:000262">
    <property type="entry name" value="RUN and SH3 domain containing 1"/>
    <property type="match status" value="1"/>
</dbReference>
<dbReference type="Gene3D" id="1.20.58.900">
    <property type="match status" value="1"/>
</dbReference>
<dbReference type="Gene3D" id="2.30.30.40">
    <property type="entry name" value="SH3 Domains"/>
    <property type="match status" value="1"/>
</dbReference>
<dbReference type="InterPro" id="IPR004012">
    <property type="entry name" value="Run_dom"/>
</dbReference>
<dbReference type="InterPro" id="IPR037213">
    <property type="entry name" value="Run_dom_sf"/>
</dbReference>
<dbReference type="InterPro" id="IPR047341">
    <property type="entry name" value="RUN_RUSC1"/>
</dbReference>
<dbReference type="InterPro" id="IPR047343">
    <property type="entry name" value="RUSC1_2"/>
</dbReference>
<dbReference type="InterPro" id="IPR036028">
    <property type="entry name" value="SH3-like_dom_sf"/>
</dbReference>
<dbReference type="InterPro" id="IPR001452">
    <property type="entry name" value="SH3_domain"/>
</dbReference>
<dbReference type="PANTHER" id="PTHR15591:SF11">
    <property type="entry name" value="AP-4 COMPLEX ACCESSORY SUBUNIT RUSC1"/>
    <property type="match status" value="1"/>
</dbReference>
<dbReference type="PANTHER" id="PTHR15591">
    <property type="entry name" value="RUN AND SH3 DOMAIN CONTAINING"/>
    <property type="match status" value="1"/>
</dbReference>
<dbReference type="Pfam" id="PF02759">
    <property type="entry name" value="RUN"/>
    <property type="match status" value="1"/>
</dbReference>
<dbReference type="Pfam" id="PF14604">
    <property type="entry name" value="SH3_9"/>
    <property type="match status" value="1"/>
</dbReference>
<dbReference type="SMART" id="SM00593">
    <property type="entry name" value="RUN"/>
    <property type="match status" value="1"/>
</dbReference>
<dbReference type="SMART" id="SM00326">
    <property type="entry name" value="SH3"/>
    <property type="match status" value="1"/>
</dbReference>
<dbReference type="SUPFAM" id="SSF140741">
    <property type="entry name" value="RUN domain-like"/>
    <property type="match status" value="1"/>
</dbReference>
<dbReference type="SUPFAM" id="SSF50044">
    <property type="entry name" value="SH3-domain"/>
    <property type="match status" value="1"/>
</dbReference>
<dbReference type="PROSITE" id="PS50826">
    <property type="entry name" value="RUN"/>
    <property type="match status" value="1"/>
</dbReference>
<dbReference type="PROSITE" id="PS50002">
    <property type="entry name" value="SH3"/>
    <property type="match status" value="1"/>
</dbReference>
<gene>
    <name evidence="14 16" type="primary">RUSC1</name>
    <name evidence="13" type="synonym">NESCA</name>
</gene>
<feature type="chain" id="PRO_0000097532" description="AP-4 complex accessory subunit RUSC1">
    <location>
        <begin position="1"/>
        <end position="902"/>
    </location>
</feature>
<feature type="domain" description="RUN" evidence="2">
    <location>
        <begin position="522"/>
        <end position="666"/>
    </location>
</feature>
<feature type="domain" description="SH3" evidence="3">
    <location>
        <begin position="844"/>
        <end position="902"/>
    </location>
</feature>
<feature type="region of interest" description="Disordered" evidence="4">
    <location>
        <begin position="31"/>
        <end position="67"/>
    </location>
</feature>
<feature type="region of interest" description="Disordered" evidence="4">
    <location>
        <begin position="81"/>
        <end position="155"/>
    </location>
</feature>
<feature type="region of interest" description="Disordered" evidence="4">
    <location>
        <begin position="189"/>
        <end position="227"/>
    </location>
</feature>
<feature type="region of interest" description="Disordered" evidence="4">
    <location>
        <begin position="247"/>
        <end position="450"/>
    </location>
</feature>
<feature type="region of interest" description="Interaction with TRAF6" evidence="6">
    <location>
        <begin position="470"/>
        <end position="605"/>
    </location>
</feature>
<feature type="region of interest" description="Interaction with IKBKG" evidence="6">
    <location>
        <begin position="606"/>
        <end position="672"/>
    </location>
</feature>
<feature type="region of interest" description="Disordered" evidence="4">
    <location>
        <begin position="706"/>
        <end position="729"/>
    </location>
</feature>
<feature type="region of interest" description="Disordered" evidence="4">
    <location>
        <begin position="747"/>
        <end position="776"/>
    </location>
</feature>
<feature type="compositionally biased region" description="Low complexity" evidence="4">
    <location>
        <begin position="94"/>
        <end position="112"/>
    </location>
</feature>
<feature type="compositionally biased region" description="Low complexity" evidence="4">
    <location>
        <begin position="249"/>
        <end position="261"/>
    </location>
</feature>
<feature type="compositionally biased region" description="Polar residues" evidence="4">
    <location>
        <begin position="277"/>
        <end position="289"/>
    </location>
</feature>
<feature type="compositionally biased region" description="Basic and acidic residues" evidence="4">
    <location>
        <begin position="291"/>
        <end position="309"/>
    </location>
</feature>
<feature type="compositionally biased region" description="Pro residues" evidence="4">
    <location>
        <begin position="381"/>
        <end position="390"/>
    </location>
</feature>
<feature type="compositionally biased region" description="Pro residues" evidence="4">
    <location>
        <begin position="398"/>
        <end position="407"/>
    </location>
</feature>
<feature type="compositionally biased region" description="Low complexity" evidence="4">
    <location>
        <begin position="433"/>
        <end position="450"/>
    </location>
</feature>
<feature type="splice variant" id="VSP_010855" description="In isoform 2." evidence="8 9 10 11 12">
    <location>
        <begin position="1"/>
        <end position="469"/>
    </location>
</feature>
<feature type="splice variant" id="VSP_054052" description="In isoform 3." evidence="10">
    <original>MLSPQRALLCNLNHIHLQHVSLGLHLSRRPELQEGPLSTPPPPGDTGGKESRGPCSGTLVDANSNSPAVPCRCCQEHGPGLENRQDPSQEEEGAASPSDPGCSSSLSSCSDLSPDESPVSVYLRDLPGDEDAHPQPSIIPLEQGSPLASAGPGTCSPDSFCCSPDSCSGASSSPDPGLDSNCNALTTCQDVPSPGLEEEDERAEQDLPTSELLEADDGKIDAGKTEPSWKINPIWKIDTEKTKAEWKTTENNNTGWKNNGNVNSSWKSEPEKFDSGWKTNTRITDSGSKTDAGKIDGGWRSDVSEEPVPHRTITSFHELAQKRKRGPGLPLVPQAKKDRSDWLIVFSPDTELPPSGSPGGSSAPPREVTTFKELRSRSRAPAPPVPPRDPPVGWALVPPRPPPPPVPPRRKKNRPGLQPIAEGQSEEGRAVSPAAGEEAPAAKEPGAQAGLE</original>
    <variation>MPPTCSPGLRRQDWAPGRCAGLHLPPRAPSSPALQALAGQAG</variation>
    <location>
        <begin position="1"/>
        <end position="452"/>
    </location>
</feature>
<feature type="splice variant" id="VSP_054053" description="In isoform 4." evidence="9">
    <location>
        <begin position="621"/>
        <end position="726"/>
    </location>
</feature>
<feature type="sequence variant" id="VAR_036803" description="In dbSNP:rs12061020.">
    <original>S</original>
    <variation>F</variation>
    <location>
        <position position="362"/>
    </location>
</feature>
<feature type="sequence variant" id="VAR_051329" description="In dbSNP:rs35826120.">
    <original>V</original>
    <variation>A</variation>
    <location>
        <position position="493"/>
    </location>
</feature>
<feature type="mutagenesis site" description="Abrogates nuclear redistribution." evidence="5">
    <original>L</original>
    <variation>A</variation>
    <location>
        <position position="531"/>
    </location>
</feature>
<feature type="sequence conflict" description="In Ref. 7; BC025680." evidence="15" ref="7">
    <original>P</original>
    <variation>S</variation>
    <location>
        <position position="36"/>
    </location>
</feature>
<feature type="sequence conflict" description="In Ref. 1; BAA77507." evidence="15" ref="1">
    <original>V</original>
    <variation>L</variation>
    <location>
        <position position="539"/>
    </location>
</feature>
<feature type="sequence conflict" description="In Ref. 1; BAA77507." evidence="15" ref="1">
    <original>P</original>
    <variation>T</variation>
    <location>
        <position position="770"/>
    </location>
</feature>
<feature type="sequence conflict" description="In Ref. 4; CAB45702." evidence="15" ref="4">
    <original>F</original>
    <variation>L</variation>
    <location>
        <position position="788"/>
    </location>
</feature>
<feature type="sequence conflict" description="In Ref. 1; BAA77507." evidence="15" ref="1">
    <original>GPA</original>
    <variation>APP</variation>
    <location>
        <begin position="793"/>
        <end position="795"/>
    </location>
</feature>
<feature type="sequence conflict" description="In Ref. 4; CAB45702." evidence="15" ref="4">
    <original>L</original>
    <variation>F</variation>
    <location>
        <position position="852"/>
    </location>
</feature>
<feature type="sequence conflict" description="In Ref. 4; CAB45702." evidence="15" ref="4">
    <original>F</original>
    <variation>Y</variation>
    <location>
        <position position="865"/>
    </location>
</feature>
<feature type="helix" evidence="17">
    <location>
        <begin position="484"/>
        <end position="502"/>
    </location>
</feature>
<feature type="helix" evidence="17">
    <location>
        <begin position="508"/>
        <end position="515"/>
    </location>
</feature>
<feature type="turn" evidence="17">
    <location>
        <begin position="517"/>
        <end position="519"/>
    </location>
</feature>
<feature type="helix" evidence="17">
    <location>
        <begin position="521"/>
        <end position="529"/>
    </location>
</feature>
<feature type="helix" evidence="17">
    <location>
        <begin position="531"/>
        <end position="540"/>
    </location>
</feature>
<feature type="strand" evidence="17">
    <location>
        <begin position="545"/>
        <end position="549"/>
    </location>
</feature>
<feature type="turn" evidence="17">
    <location>
        <begin position="550"/>
        <end position="552"/>
    </location>
</feature>
<feature type="strand" evidence="17">
    <location>
        <begin position="553"/>
        <end position="556"/>
    </location>
</feature>
<feature type="helix" evidence="17">
    <location>
        <begin position="559"/>
        <end position="566"/>
    </location>
</feature>
<feature type="helix" evidence="17">
    <location>
        <begin position="574"/>
        <end position="585"/>
    </location>
</feature>
<feature type="helix" evidence="17">
    <location>
        <begin position="592"/>
        <end position="606"/>
    </location>
</feature>
<feature type="helix" evidence="17">
    <location>
        <begin position="609"/>
        <end position="617"/>
    </location>
</feature>
<feature type="helix" evidence="17">
    <location>
        <begin position="620"/>
        <end position="626"/>
    </location>
</feature>
<feature type="helix" evidence="17">
    <location>
        <begin position="632"/>
        <end position="635"/>
    </location>
</feature>
<feature type="turn" evidence="17">
    <location>
        <begin position="639"/>
        <end position="642"/>
    </location>
</feature>
<feature type="helix" evidence="17">
    <location>
        <begin position="643"/>
        <end position="651"/>
    </location>
</feature>
<feature type="helix" evidence="17">
    <location>
        <begin position="652"/>
        <end position="656"/>
    </location>
</feature>
<name>RUSC1_HUMAN</name>
<accession>Q9BVN2</accession>
<accession>B3KWM9</accession>
<accession>Q5T9U9</accession>
<accession>Q5T9V0</accession>
<accession>Q5T9V1</accession>
<accession>Q5T9V2</accession>
<accession>Q9UPY4</accession>
<accession>Q9Y4T5</accession>